<reference key="1">
    <citation type="submission" date="2007-03" db="EMBL/GenBank/DDBJ databases">
        <title>Annotation of Culex pipiens quinquefasciatus.</title>
        <authorList>
            <consortium name="The Broad Institute Genome Sequencing Platform"/>
            <person name="Atkinson P.W."/>
            <person name="Hemingway J."/>
            <person name="Christensen B.M."/>
            <person name="Higgs S."/>
            <person name="Kodira C.D."/>
            <person name="Hannick L.I."/>
            <person name="Megy K."/>
            <person name="O'Leary S.B."/>
            <person name="Pearson M."/>
            <person name="Haas B.J."/>
            <person name="Mauceli E."/>
            <person name="Wortman J.R."/>
            <person name="Lee N.H."/>
            <person name="Guigo R."/>
            <person name="Stanke M."/>
            <person name="Alvarado L."/>
            <person name="Amedeo P."/>
            <person name="Antoine C.H."/>
            <person name="Arensburger P."/>
            <person name="Bidwell S.L."/>
            <person name="Crawford M."/>
            <person name="Camaro F."/>
            <person name="Devon K."/>
            <person name="Engels R."/>
            <person name="Hammond M."/>
            <person name="Howarth C."/>
            <person name="Koehrsen M."/>
            <person name="Lawson D."/>
            <person name="Montgomery P."/>
            <person name="Nene V."/>
            <person name="Nusbaum C."/>
            <person name="Puiu D."/>
            <person name="Romero-Severson J."/>
            <person name="Severson D.W."/>
            <person name="Shumway M."/>
            <person name="Sisk P."/>
            <person name="Stolte C."/>
            <person name="Zeng Q."/>
            <person name="Eisenstadt E."/>
            <person name="Fraser-Liggett C.M."/>
            <person name="Strausberg R."/>
            <person name="Galagan J."/>
            <person name="Birren B."/>
            <person name="Collins F.H."/>
        </authorList>
    </citation>
    <scope>NUCLEOTIDE SEQUENCE [LARGE SCALE GENOMIC DNA]</scope>
    <source>
        <strain>JHB</strain>
    </source>
</reference>
<accession>B0WAE3</accession>
<feature type="chain" id="PRO_0000413336" description="Glutamyl-tRNA(Gln) amidotransferase subunit A, mitochondrial">
    <location>
        <begin position="1"/>
        <end position="496"/>
    </location>
</feature>
<feature type="active site" description="Charge relay system" evidence="1">
    <location>
        <position position="80"/>
    </location>
</feature>
<feature type="active site" description="Charge relay system" evidence="1">
    <location>
        <position position="161"/>
    </location>
</feature>
<feature type="active site" description="Acyl-ester intermediate" evidence="1">
    <location>
        <position position="185"/>
    </location>
</feature>
<evidence type="ECO:0000255" key="1">
    <source>
        <dbReference type="HAMAP-Rule" id="MF_03150"/>
    </source>
</evidence>
<comment type="function">
    <text evidence="1">Allows the formation of correctly charged Gln-tRNA(Gln) through the transamidation of misacylated Glu-tRNA(Gln) in the mitochondria. The reaction takes place in the presence of glutamine and ATP through an activated gamma-phospho-Glu-tRNA(Gln).</text>
</comment>
<comment type="catalytic activity">
    <reaction evidence="1">
        <text>L-glutamyl-tRNA(Gln) + L-glutamine + ATP + H2O = L-glutaminyl-tRNA(Gln) + L-glutamate + ADP + phosphate + H(+)</text>
        <dbReference type="Rhea" id="RHEA:17521"/>
        <dbReference type="Rhea" id="RHEA-COMP:9681"/>
        <dbReference type="Rhea" id="RHEA-COMP:9684"/>
        <dbReference type="ChEBI" id="CHEBI:15377"/>
        <dbReference type="ChEBI" id="CHEBI:15378"/>
        <dbReference type="ChEBI" id="CHEBI:29985"/>
        <dbReference type="ChEBI" id="CHEBI:30616"/>
        <dbReference type="ChEBI" id="CHEBI:43474"/>
        <dbReference type="ChEBI" id="CHEBI:58359"/>
        <dbReference type="ChEBI" id="CHEBI:78520"/>
        <dbReference type="ChEBI" id="CHEBI:78521"/>
        <dbReference type="ChEBI" id="CHEBI:456216"/>
        <dbReference type="EC" id="6.3.5.7"/>
    </reaction>
</comment>
<comment type="subunit">
    <text evidence="1">Subunit of the heterotrimeric GatCAB amidotransferase (AdT) complex, composed of A, B and C subunits.</text>
</comment>
<comment type="subcellular location">
    <subcellularLocation>
        <location evidence="1">Mitochondrion</location>
    </subcellularLocation>
</comment>
<comment type="similarity">
    <text evidence="1">Belongs to the amidase family. GatA subfamily.</text>
</comment>
<proteinExistence type="inferred from homology"/>
<gene>
    <name evidence="1" type="primary">gatA</name>
    <name type="ORF">CPIJ004047</name>
</gene>
<dbReference type="EC" id="6.3.5.7" evidence="1"/>
<dbReference type="EMBL" id="DS231871">
    <property type="protein sequence ID" value="EDS41179.1"/>
    <property type="molecule type" value="Genomic_DNA"/>
</dbReference>
<dbReference type="RefSeq" id="XP_001845677.1">
    <property type="nucleotide sequence ID" value="XM_001845625.1"/>
</dbReference>
<dbReference type="SMR" id="B0WAE3"/>
<dbReference type="FunCoup" id="B0WAE3">
    <property type="interactions" value="814"/>
</dbReference>
<dbReference type="STRING" id="7176.B0WAE3"/>
<dbReference type="EnsemblMetazoa" id="CPIJ004047-RA">
    <property type="protein sequence ID" value="CPIJ004047-PA"/>
    <property type="gene ID" value="CPIJ004047"/>
</dbReference>
<dbReference type="GeneID" id="6035507"/>
<dbReference type="KEGG" id="cqu:CpipJ_CPIJ004047"/>
<dbReference type="CTD" id="42283"/>
<dbReference type="VEuPathDB" id="VectorBase:CPIJ004047"/>
<dbReference type="VEuPathDB" id="VectorBase:CQUJHB015963"/>
<dbReference type="eggNOG" id="KOG1211">
    <property type="taxonomic scope" value="Eukaryota"/>
</dbReference>
<dbReference type="HOGENOM" id="CLU_009600_7_6_1"/>
<dbReference type="InParanoid" id="B0WAE3"/>
<dbReference type="OMA" id="QPASYCG"/>
<dbReference type="OrthoDB" id="421993at2759"/>
<dbReference type="PhylomeDB" id="B0WAE3"/>
<dbReference type="Proteomes" id="UP000002320">
    <property type="component" value="Unassembled WGS sequence"/>
</dbReference>
<dbReference type="GO" id="GO:0030956">
    <property type="term" value="C:glutamyl-tRNA(Gln) amidotransferase complex"/>
    <property type="evidence" value="ECO:0007669"/>
    <property type="project" value="UniProtKB-UniRule"/>
</dbReference>
<dbReference type="GO" id="GO:0005739">
    <property type="term" value="C:mitochondrion"/>
    <property type="evidence" value="ECO:0007669"/>
    <property type="project" value="UniProtKB-SubCell"/>
</dbReference>
<dbReference type="GO" id="GO:0005524">
    <property type="term" value="F:ATP binding"/>
    <property type="evidence" value="ECO:0007669"/>
    <property type="project" value="UniProtKB-KW"/>
</dbReference>
<dbReference type="GO" id="GO:0050567">
    <property type="term" value="F:glutaminyl-tRNA synthase (glutamine-hydrolyzing) activity"/>
    <property type="evidence" value="ECO:0007669"/>
    <property type="project" value="UniProtKB-UniRule"/>
</dbReference>
<dbReference type="GO" id="GO:0070681">
    <property type="term" value="P:glutaminyl-tRNAGln biosynthesis via transamidation"/>
    <property type="evidence" value="ECO:0007669"/>
    <property type="project" value="UniProtKB-UniRule"/>
</dbReference>
<dbReference type="GO" id="GO:0032543">
    <property type="term" value="P:mitochondrial translation"/>
    <property type="evidence" value="ECO:0007669"/>
    <property type="project" value="UniProtKB-UniRule"/>
</dbReference>
<dbReference type="Gene3D" id="3.90.1300.10">
    <property type="entry name" value="Amidase signature (AS) domain"/>
    <property type="match status" value="1"/>
</dbReference>
<dbReference type="HAMAP" id="MF_00120">
    <property type="entry name" value="GatA"/>
    <property type="match status" value="1"/>
</dbReference>
<dbReference type="InterPro" id="IPR000120">
    <property type="entry name" value="Amidase"/>
</dbReference>
<dbReference type="InterPro" id="IPR023631">
    <property type="entry name" value="Amidase_dom"/>
</dbReference>
<dbReference type="InterPro" id="IPR036928">
    <property type="entry name" value="AS_sf"/>
</dbReference>
<dbReference type="InterPro" id="IPR004412">
    <property type="entry name" value="GatA"/>
</dbReference>
<dbReference type="NCBIfam" id="TIGR00132">
    <property type="entry name" value="gatA"/>
    <property type="match status" value="1"/>
</dbReference>
<dbReference type="PANTHER" id="PTHR11895:SF7">
    <property type="entry name" value="GLUTAMYL-TRNA(GLN) AMIDOTRANSFERASE SUBUNIT A, MITOCHONDRIAL"/>
    <property type="match status" value="1"/>
</dbReference>
<dbReference type="PANTHER" id="PTHR11895">
    <property type="entry name" value="TRANSAMIDASE"/>
    <property type="match status" value="1"/>
</dbReference>
<dbReference type="Pfam" id="PF01425">
    <property type="entry name" value="Amidase"/>
    <property type="match status" value="1"/>
</dbReference>
<dbReference type="SUPFAM" id="SSF75304">
    <property type="entry name" value="Amidase signature (AS) enzymes"/>
    <property type="match status" value="1"/>
</dbReference>
<sequence>MNRRLPATLRELSECFRSKSLDPLTFTEHTLHRASDRAKHLNAFVRISSQTALQQAEASTQRHRSGSTLGPLDGATIAVKDNFCTRNVATTCASRMLESFVPTYSATVWERLERGGAVLVGKTNMDQFGMGSGTVDSIFGPTRNCWSESLEGERFRIAGGSSGGSAVAVASGVCFAALGSDTGGSTRNPASYCGVVGLKPTYGLLSRHGLIPLVNSMDVPGILTRTVKDCATVLNAIAGPDERDSTTVKKPFKPVELPESICLKGLRIGIPVEYHCEGLSEEVLHTWAKVADMLEDAGATVTSVSLPYTSASIFVYSILNQCEVSSNMSRYDGIEFGLRSDEDASTEQLYARSRAEGFNGVVKNRILTGNYFLLRKNYDKFFQKALQVRRLIAEDFDKAFTKVDFLLTPTTLSSAPLYEDFVQGTNRDQCAVQDFCTQPANMGGIPAISLPIRLSEHKLPISLQLMGPNFSEQNLLTVAKWIESQVEFEHLCATND</sequence>
<keyword id="KW-0067">ATP-binding</keyword>
<keyword id="KW-0436">Ligase</keyword>
<keyword id="KW-0496">Mitochondrion</keyword>
<keyword id="KW-0547">Nucleotide-binding</keyword>
<keyword id="KW-0648">Protein biosynthesis</keyword>
<keyword id="KW-1185">Reference proteome</keyword>
<protein>
    <recommendedName>
        <fullName evidence="1">Glutamyl-tRNA(Gln) amidotransferase subunit A, mitochondrial</fullName>
        <shortName evidence="1">Glu-AdT subunit A</shortName>
        <ecNumber evidence="1">6.3.5.7</ecNumber>
    </recommendedName>
</protein>
<name>GATA_CULQU</name>
<organism>
    <name type="scientific">Culex quinquefasciatus</name>
    <name type="common">Southern house mosquito</name>
    <name type="synonym">Culex pungens</name>
    <dbReference type="NCBI Taxonomy" id="7176"/>
    <lineage>
        <taxon>Eukaryota</taxon>
        <taxon>Metazoa</taxon>
        <taxon>Ecdysozoa</taxon>
        <taxon>Arthropoda</taxon>
        <taxon>Hexapoda</taxon>
        <taxon>Insecta</taxon>
        <taxon>Pterygota</taxon>
        <taxon>Neoptera</taxon>
        <taxon>Endopterygota</taxon>
        <taxon>Diptera</taxon>
        <taxon>Nematocera</taxon>
        <taxon>Culicoidea</taxon>
        <taxon>Culicidae</taxon>
        <taxon>Culicinae</taxon>
        <taxon>Culicini</taxon>
        <taxon>Culex</taxon>
        <taxon>Culex</taxon>
    </lineage>
</organism>